<organism evidence="13">
    <name type="scientific">Rhizopus delemar (strain RA 99-880 / ATCC MYA-4621 / FGSC 9543 / NRRL 43880)</name>
    <name type="common">Mucormycosis agent</name>
    <name type="synonym">Rhizopus arrhizus var. delemar</name>
    <dbReference type="NCBI Taxonomy" id="246409"/>
    <lineage>
        <taxon>Eukaryota</taxon>
        <taxon>Fungi</taxon>
        <taxon>Fungi incertae sedis</taxon>
        <taxon>Mucoromycota</taxon>
        <taxon>Mucoromycotina</taxon>
        <taxon>Mucoromycetes</taxon>
        <taxon>Mucorales</taxon>
        <taxon>Mucorineae</taxon>
        <taxon>Rhizopodaceae</taxon>
        <taxon>Rhizopus</taxon>
    </lineage>
</organism>
<evidence type="ECO:0000255" key="1"/>
<evidence type="ECO:0000255" key="2">
    <source>
        <dbReference type="PROSITE-ProRule" id="PRU00498"/>
    </source>
</evidence>
<evidence type="ECO:0000256" key="3">
    <source>
        <dbReference type="SAM" id="MobiDB-lite"/>
    </source>
</evidence>
<evidence type="ECO:0000269" key="4">
    <source>
    </source>
</evidence>
<evidence type="ECO:0000269" key="5">
    <source>
    </source>
</evidence>
<evidence type="ECO:0000269" key="6">
    <source>
    </source>
</evidence>
<evidence type="ECO:0000303" key="7">
    <source>
    </source>
</evidence>
<evidence type="ECO:0000305" key="8"/>
<evidence type="ECO:0000305" key="9">
    <source>
    </source>
</evidence>
<evidence type="ECO:0000305" key="10">
    <source>
    </source>
</evidence>
<evidence type="ECO:0000305" key="11">
    <source>
    </source>
</evidence>
<evidence type="ECO:0000312" key="12">
    <source>
        <dbReference type="EMBL" id="EIE87171.1"/>
    </source>
</evidence>
<evidence type="ECO:0000312" key="13">
    <source>
        <dbReference type="Proteomes" id="UP000009138"/>
    </source>
</evidence>
<comment type="function">
    <text evidence="4 6">Promotes invasion of host epithelial cells by adhering to receptors on the host cell surface to facilitate endocytosis of the pathogen into host cells (PubMed:24355926, PubMed:32487760). Binds HSPA5/BiP protein on the cell surface of host nasal epithelial cells (PubMed:24355926).</text>
</comment>
<comment type="subunit">
    <text evidence="4 11">Interacts with HSPA5/BiP on the cell surface of host nasal epithelial cells.</text>
</comment>
<comment type="subcellular location">
    <subcellularLocation>
        <location evidence="4">Cell membrane</location>
        <topology evidence="1">Lipid-anchor</topology>
        <topology evidence="1">GPI-anchor</topology>
    </subcellularLocation>
</comment>
<comment type="developmental stage">
    <text evidence="4">Expressed in spores (PubMed:24355926). Expressed in germlings (PubMed:24355926).</text>
</comment>
<comment type="induction">
    <text evidence="4 5">Expressed during growth in host lung and brain, and during growth in presence of epithelial cells (PubMed:24355926). Induced in presence of high free iron (PubMed:27159390). Induced during growth in high glucose (PubMed:27159390). Induced in presence of 3-hydroxybutyric acid (BHB) (PubMed:27159390).</text>
</comment>
<comment type="disruption phenotype">
    <text evidence="4 5 6">RNAi-mediated knockdown decreases invasion of human nasal epithelial cells by R.delemar (PubMed:32487760). Simultaneous RNAi-mediated knockdown of CotH2 and CotH3 decreases invasion of human epithelial cells (PubMed:24355926). Simultaneous RNAi-mediated knockdown of CotH2 and CotH3 decreases virulence in a mouse model of ketoacidosis (PubMed:24355926, PubMed:27159390). Simultaneous RNAi-mediated knockdown of CotH2 and CotH3 does not lead to sensitivity to cell wall stress (induced by Congo Red, Calcofluor White, hydrogen peroxide, sodium dodecyl sulfate, or Triton X-100) or alter resistance to killing by phagocytes (PubMed:24355926).</text>
</comment>
<comment type="biotechnology">
    <text evidence="9 10 11">Antibodies against the protein protects a diabetic ketoacidotic (DKA) mouse model and a neutropenic mouse model from mucormycosis infection, and nasal epithelial cells from invasion by R.delemar, and thus could potentially be used to treat the disease.</text>
</comment>
<dbReference type="EMBL" id="CH476740">
    <property type="protein sequence ID" value="EIE87171.1"/>
    <property type="molecule type" value="Genomic_DNA"/>
</dbReference>
<dbReference type="SMR" id="I1CFE1"/>
<dbReference type="STRING" id="246409.I1CFE1"/>
<dbReference type="GlyCosmos" id="I1CFE1">
    <property type="glycosylation" value="10 sites, No reported glycans"/>
</dbReference>
<dbReference type="VEuPathDB" id="FungiDB:RO3G_11882"/>
<dbReference type="eggNOG" id="ENOG502SKY8">
    <property type="taxonomic scope" value="Eukaryota"/>
</dbReference>
<dbReference type="InParanoid" id="I1CFE1"/>
<dbReference type="OMA" id="WMEQTND"/>
<dbReference type="OrthoDB" id="71680at4827"/>
<dbReference type="PHI-base" id="PHI:4143"/>
<dbReference type="Proteomes" id="UP000009138">
    <property type="component" value="Unassembled WGS sequence"/>
</dbReference>
<dbReference type="GO" id="GO:0005886">
    <property type="term" value="C:plasma membrane"/>
    <property type="evidence" value="ECO:0007669"/>
    <property type="project" value="UniProtKB-SubCell"/>
</dbReference>
<dbReference type="GO" id="GO:0098552">
    <property type="term" value="C:side of membrane"/>
    <property type="evidence" value="ECO:0007669"/>
    <property type="project" value="UniProtKB-KW"/>
</dbReference>
<dbReference type="GO" id="GO:0046789">
    <property type="term" value="F:host cell surface receptor binding"/>
    <property type="evidence" value="ECO:0000314"/>
    <property type="project" value="UniProtKB"/>
</dbReference>
<dbReference type="GO" id="GO:0044652">
    <property type="term" value="P:adhesion of symbiont to host endothelial cell"/>
    <property type="evidence" value="ECO:0000314"/>
    <property type="project" value="UniProtKB"/>
</dbReference>
<dbReference type="GO" id="GO:0044651">
    <property type="term" value="P:adhesion of symbiont to host epithelial cell"/>
    <property type="evidence" value="ECO:0000314"/>
    <property type="project" value="UniProtKB"/>
</dbReference>
<dbReference type="GO" id="GO:0044409">
    <property type="term" value="P:symbiont entry into host"/>
    <property type="evidence" value="ECO:0000314"/>
    <property type="project" value="UniProtKB"/>
</dbReference>
<dbReference type="Gene3D" id="2.60.40.10">
    <property type="entry name" value="Immunoglobulins"/>
    <property type="match status" value="1"/>
</dbReference>
<dbReference type="InterPro" id="IPR013783">
    <property type="entry name" value="Ig-like_fold"/>
</dbReference>
<dbReference type="InterPro" id="IPR014867">
    <property type="entry name" value="Spore_coat_CotH_CotH2/3/7"/>
</dbReference>
<dbReference type="Pfam" id="PF08757">
    <property type="entry name" value="CotH"/>
    <property type="match status" value="1"/>
</dbReference>
<name>COTH3_RHIO9</name>
<feature type="signal peptide" evidence="1">
    <location>
        <begin position="1"/>
        <end position="17"/>
    </location>
</feature>
<feature type="chain" id="PRO_5003638081" description="Invasin CotH3" evidence="1">
    <location>
        <begin position="18"/>
        <end position="601"/>
    </location>
</feature>
<feature type="propeptide" id="PRO_0000453694" description="Removed in mature form" evidence="1">
    <location>
        <begin position="580"/>
        <end position="601"/>
    </location>
</feature>
<feature type="region of interest" description="Disordered" evidence="3">
    <location>
        <begin position="539"/>
        <end position="581"/>
    </location>
</feature>
<feature type="compositionally biased region" description="Low complexity" evidence="3">
    <location>
        <begin position="539"/>
        <end position="579"/>
    </location>
</feature>
<feature type="lipid moiety-binding region" description="GPI-anchor amidated serine" evidence="1">
    <location>
        <position position="579"/>
    </location>
</feature>
<feature type="glycosylation site" description="N-linked (GlcNAc...) asparagine" evidence="2">
    <location>
        <position position="28"/>
    </location>
</feature>
<feature type="glycosylation site" description="N-linked (GlcNAc...) asparagine" evidence="2">
    <location>
        <position position="85"/>
    </location>
</feature>
<feature type="glycosylation site" description="N-linked (GlcNAc...) asparagine" evidence="2">
    <location>
        <position position="170"/>
    </location>
</feature>
<feature type="glycosylation site" description="N-linked (GlcNAc...) asparagine" evidence="2">
    <location>
        <position position="324"/>
    </location>
</feature>
<feature type="glycosylation site" description="N-linked (GlcNAc...) asparagine" evidence="2">
    <location>
        <position position="449"/>
    </location>
</feature>
<feature type="glycosylation site" description="N-linked (GlcNAc...) asparagine" evidence="2">
    <location>
        <position position="527"/>
    </location>
</feature>
<feature type="glycosylation site" description="N-linked (GlcNAc...) asparagine" evidence="2">
    <location>
        <position position="541"/>
    </location>
</feature>
<feature type="glycosylation site" description="N-linked (GlcNAc...) asparagine" evidence="2">
    <location>
        <position position="554"/>
    </location>
</feature>
<feature type="glycosylation site" description="N-linked (GlcNAc...) asparagine" evidence="2">
    <location>
        <position position="561"/>
    </location>
</feature>
<feature type="glycosylation site" description="N-linked (GlcNAc...) asparagine" evidence="2">
    <location>
        <position position="571"/>
    </location>
</feature>
<protein>
    <recommendedName>
        <fullName evidence="7">Invasin CotH3</fullName>
    </recommendedName>
    <alternativeName>
        <fullName evidence="7">Spore coat protein homolog 3</fullName>
    </alternativeName>
</protein>
<reference evidence="13" key="1">
    <citation type="journal article" date="2009" name="PLoS Genet.">
        <title>Genomic analysis of the basal lineage fungus Rhizopus oryzae reveals a whole-genome duplication.</title>
        <authorList>
            <person name="Ma L.-J."/>
            <person name="Ibrahim A.S."/>
            <person name="Skory C."/>
            <person name="Grabherr M.G."/>
            <person name="Burger G."/>
            <person name="Butler M."/>
            <person name="Elias M."/>
            <person name="Idnurm A."/>
            <person name="Lang B.F."/>
            <person name="Sone T."/>
            <person name="Abe A."/>
            <person name="Calvo S.E."/>
            <person name="Corrochano L.M."/>
            <person name="Engels R."/>
            <person name="Fu J."/>
            <person name="Hansberg W."/>
            <person name="Kim J.-M."/>
            <person name="Kodira C.D."/>
            <person name="Koehrsen M.J."/>
            <person name="Liu B."/>
            <person name="Miranda-Saavedra D."/>
            <person name="O'Leary S."/>
            <person name="Ortiz-Castellanos L."/>
            <person name="Poulter R."/>
            <person name="Rodriguez-Romero J."/>
            <person name="Ruiz-Herrera J."/>
            <person name="Shen Y.-Q."/>
            <person name="Zeng Q."/>
            <person name="Galagan J."/>
            <person name="Birren B.W."/>
            <person name="Cuomo C.A."/>
            <person name="Wickes B.L."/>
        </authorList>
    </citation>
    <scope>NUCLEOTIDE SEQUENCE [LARGE SCALE GENOMIC DNA]</scope>
    <source>
        <strain evidence="13">RA 99-880 / ATCC MYA-4621 / FGSC 9543 / NRRL 43880</strain>
    </source>
</reference>
<reference evidence="8" key="2">
    <citation type="journal article" date="2014" name="J. Clin. Invest.">
        <title>CotH3 mediates fungal invasion of host cells during mucormycosis.</title>
        <authorList>
            <person name="Gebremariam T."/>
            <person name="Liu M."/>
            <person name="Luo G."/>
            <person name="Bruno V."/>
            <person name="Phan Q.T."/>
            <person name="Waring A.J."/>
            <person name="Edwards J.E. Jr."/>
            <person name="Filler S.G."/>
            <person name="Yeaman M.R."/>
            <person name="Ibrahim A.S."/>
        </authorList>
    </citation>
    <scope>FUNCTION</scope>
    <scope>INTERACTION WITH HOST HSPA5/BIP</scope>
    <scope>SUBCELLULAR LOCATION</scope>
    <scope>DEVELOPMENTAL STAGE</scope>
    <scope>INDUCTION</scope>
    <scope>DISRUPTION PHENOTYPE</scope>
    <scope>BIOTECHNOLOGY</scope>
</reference>
<reference evidence="8" key="3">
    <citation type="journal article" date="2016" name="J. Clin. Invest.">
        <title>Bicarbonate correction of ketoacidosis alters host-pathogen interactions and alleviates mucormycosis.</title>
        <authorList>
            <person name="Gebremariam T."/>
            <person name="Lin L."/>
            <person name="Liu M."/>
            <person name="Kontoyiannis D.P."/>
            <person name="French S."/>
            <person name="Edwards J.E. Jr."/>
            <person name="Filler S.G."/>
            <person name="Ibrahim A.S."/>
        </authorList>
    </citation>
    <scope>INDUCTION</scope>
    <scope>DISRUPTION PHENOTYPE</scope>
</reference>
<reference evidence="8" key="4">
    <citation type="journal article" date="2019" name="Sci. Adv.">
        <title>Anti-CotH3 antibodies protect mice from mucormycosis by prevention of invasion and augmenting opsonophagocytosis.</title>
        <authorList>
            <person name="Gebremariam T."/>
            <person name="Alkhazraji S."/>
            <person name="Soliman S.S.M."/>
            <person name="Gu Y."/>
            <person name="Jeon H.H."/>
            <person name="Zhang L."/>
            <person name="French S.W."/>
            <person name="Stevens D.A."/>
            <person name="Edwards J.E. Jr."/>
            <person name="Filler S.G."/>
            <person name="Uppuluri P."/>
            <person name="Ibrahim A.S."/>
        </authorList>
    </citation>
    <scope>BIOTECHNOLOGY</scope>
</reference>
<reference evidence="8" key="5">
    <citation type="journal article" date="2020" name="MBio">
        <title>GRP78 and Integrins Play Different Roles in Host Cell Invasion during Mucormycosis.</title>
        <authorList>
            <person name="Alqarihi A."/>
            <person name="Gebremariam T."/>
            <person name="Gu Y."/>
            <person name="Swidergall M."/>
            <person name="Alkhazraji S."/>
            <person name="Soliman S.S.M."/>
            <person name="Bruno V.M."/>
            <person name="Edwards J.E. Jr."/>
            <person name="Filler S.G."/>
            <person name="Uppuluri P."/>
            <person name="Ibrahim A.S."/>
        </authorList>
    </citation>
    <scope>FUNCTION</scope>
    <scope>INTERACTION WITH HOST HSPA5/BIP</scope>
    <scope>DISRUPTION PHENOTYPE</scope>
    <scope>BIOTECHNOLOGY</scope>
</reference>
<keyword id="KW-1003">Cell membrane</keyword>
<keyword id="KW-0325">Glycoprotein</keyword>
<keyword id="KW-0336">GPI-anchor</keyword>
<keyword id="KW-0449">Lipoprotein</keyword>
<keyword id="KW-0472">Membrane</keyword>
<keyword id="KW-1185">Reference proteome</keyword>
<keyword id="KW-0732">Signal</keyword>
<keyword id="KW-0843">Virulence</keyword>
<gene>
    <name evidence="7" type="primary">CotH3</name>
    <name evidence="12" type="ORF">RO3G_11882</name>
</gene>
<sequence>MKLSIISAAFLVAITHAASIKFNVIAPNATDVKVSVNGQQVTLTASDANVPYFTGSAEVGASKTYKYVAGGTEESFDRSLDGITNSTLNDFYNRPVTYANLPQLPWPIEKDPQWTRSGSKADIFDDNYIPSVFFHGDDSQVQNVVKNVPADRISGTLTFIGSNYVYSFQNVSFGIHGAGKKHNNAKQSWNWILSGSDTMGNRNFFKLRHMEEDPTQIRERLYSDILHAMGTYANDATMVRLFINNQGFGTFNMLDDITQFSYINAKFYNGKPPATLGPLYDGASGADFLYHPGNLDGYSSWVANTANPNGEAYEALDPLCKAWNETTYTDNTAIANFEKMFDLDRFMRFMVIEYLTADWDGYWMGQTNDGAYRDPTDNNKWYFLDQDFDGTFGVNLAAPEGNAFLDVSYKDFPSRYPGAVMINNLLQNADKKATFEKYLTETVRVLFNNVTLTNRVLALHNFLLPDLEWDRSIVQQSPGINFGWTFDQVTQNLWQGVTAPNNNGGGAAFGLVEYIAAKAQAVAKEFNISIVSQPVGPPSANGTTAAAPAPAAGNSTGKGGNQSISSSASSNKTSAQSTSGASRSKTAPIVLAISALALLVF</sequence>
<proteinExistence type="evidence at protein level"/>
<accession>I1CFE1</accession>